<gene>
    <name type="primary">ZNF449</name>
    <name type="synonym">ZSCAN19</name>
</gene>
<feature type="chain" id="PRO_0000047597" description="Zinc finger protein 449">
    <location>
        <begin position="1"/>
        <end position="518"/>
    </location>
</feature>
<feature type="domain" description="SCAN box" evidence="2">
    <location>
        <begin position="30"/>
        <end position="112"/>
    </location>
</feature>
<feature type="zinc finger region" description="C2H2-type 1" evidence="1">
    <location>
        <begin position="323"/>
        <end position="345"/>
    </location>
</feature>
<feature type="zinc finger region" description="C2H2-type 2" evidence="1">
    <location>
        <begin position="351"/>
        <end position="373"/>
    </location>
</feature>
<feature type="zinc finger region" description="C2H2-type 3" evidence="1">
    <location>
        <begin position="379"/>
        <end position="401"/>
    </location>
</feature>
<feature type="zinc finger region" description="C2H2-type 4" evidence="1">
    <location>
        <begin position="407"/>
        <end position="429"/>
    </location>
</feature>
<feature type="zinc finger region" description="C2H2-type 5" evidence="1">
    <location>
        <begin position="435"/>
        <end position="457"/>
    </location>
</feature>
<feature type="zinc finger region" description="C2H2-type 6" evidence="1">
    <location>
        <begin position="463"/>
        <end position="485"/>
    </location>
</feature>
<feature type="zinc finger region" description="C2H2-type 7" evidence="1">
    <location>
        <begin position="491"/>
        <end position="513"/>
    </location>
</feature>
<feature type="region of interest" description="Disordered" evidence="3">
    <location>
        <begin position="292"/>
        <end position="325"/>
    </location>
</feature>
<feature type="compositionally biased region" description="Polar residues" evidence="3">
    <location>
        <begin position="292"/>
        <end position="304"/>
    </location>
</feature>
<feature type="splice variant" id="VSP_011951" description="In isoform 3." evidence="5">
    <original>VDMHDMLLE</original>
    <variation>TFAAEYSHY</variation>
    <location>
        <begin position="119"/>
        <end position="127"/>
    </location>
</feature>
<feature type="splice variant" id="VSP_011949" description="In isoform 2." evidence="4">
    <original>DMHDMLLEELAPVGTAHIPPTMHLESPALQVMGPAQEAPVAEAWI</original>
    <variation>RKECGIFVIGPKEVAEAAGTRPHICLYVIPQPQDFSRVLFLFLFC</variation>
    <location>
        <begin position="120"/>
        <end position="164"/>
    </location>
</feature>
<feature type="splice variant" id="VSP_011952" description="In isoform 3." evidence="5">
    <location>
        <begin position="128"/>
        <end position="518"/>
    </location>
</feature>
<feature type="splice variant" id="VSP_011950" description="In isoform 2." evidence="4">
    <location>
        <begin position="165"/>
        <end position="518"/>
    </location>
</feature>
<feature type="sequence conflict" description="In Ref. 1; AAQ16305 and 3; CAD38639." evidence="6" ref="1 3">
    <original>M</original>
    <variation>I</variation>
    <location>
        <position position="124"/>
    </location>
</feature>
<feature type="sequence conflict" description="In Ref. 1; AAQ16305 and 3; CAD38639." evidence="6" ref="1 3">
    <original>G</original>
    <variation>V</variation>
    <location>
        <position position="187"/>
    </location>
</feature>
<feature type="sequence conflict" description="In Ref. 1; AAQ16305 and 3; CAD38639." evidence="6" ref="1 3">
    <original>P</original>
    <variation>L</variation>
    <location>
        <position position="293"/>
    </location>
</feature>
<organism>
    <name type="scientific">Homo sapiens</name>
    <name type="common">Human</name>
    <dbReference type="NCBI Taxonomy" id="9606"/>
    <lineage>
        <taxon>Eukaryota</taxon>
        <taxon>Metazoa</taxon>
        <taxon>Chordata</taxon>
        <taxon>Craniata</taxon>
        <taxon>Vertebrata</taxon>
        <taxon>Euteleostomi</taxon>
        <taxon>Mammalia</taxon>
        <taxon>Eutheria</taxon>
        <taxon>Euarchontoglires</taxon>
        <taxon>Primates</taxon>
        <taxon>Haplorrhini</taxon>
        <taxon>Catarrhini</taxon>
        <taxon>Hominidae</taxon>
        <taxon>Homo</taxon>
    </lineage>
</organism>
<reference key="1">
    <citation type="submission" date="2003-04" db="EMBL/GenBank/DDBJ databases">
        <title>Cloning and characterization of a human novel znf gene.</title>
        <authorList>
            <person name="Luo K.T."/>
            <person name="Yu L."/>
        </authorList>
    </citation>
    <scope>NUCLEOTIDE SEQUENCE [MRNA] (ISOFORM 1)</scope>
</reference>
<reference key="2">
    <citation type="journal article" date="2004" name="Nat. Genet.">
        <title>Complete sequencing and characterization of 21,243 full-length human cDNAs.</title>
        <authorList>
            <person name="Ota T."/>
            <person name="Suzuki Y."/>
            <person name="Nishikawa T."/>
            <person name="Otsuki T."/>
            <person name="Sugiyama T."/>
            <person name="Irie R."/>
            <person name="Wakamatsu A."/>
            <person name="Hayashi K."/>
            <person name="Sato H."/>
            <person name="Nagai K."/>
            <person name="Kimura K."/>
            <person name="Makita H."/>
            <person name="Sekine M."/>
            <person name="Obayashi M."/>
            <person name="Nishi T."/>
            <person name="Shibahara T."/>
            <person name="Tanaka T."/>
            <person name="Ishii S."/>
            <person name="Yamamoto J."/>
            <person name="Saito K."/>
            <person name="Kawai Y."/>
            <person name="Isono Y."/>
            <person name="Nakamura Y."/>
            <person name="Nagahari K."/>
            <person name="Murakami K."/>
            <person name="Yasuda T."/>
            <person name="Iwayanagi T."/>
            <person name="Wagatsuma M."/>
            <person name="Shiratori A."/>
            <person name="Sudo H."/>
            <person name="Hosoiri T."/>
            <person name="Kaku Y."/>
            <person name="Kodaira H."/>
            <person name="Kondo H."/>
            <person name="Sugawara M."/>
            <person name="Takahashi M."/>
            <person name="Kanda K."/>
            <person name="Yokoi T."/>
            <person name="Furuya T."/>
            <person name="Kikkawa E."/>
            <person name="Omura Y."/>
            <person name="Abe K."/>
            <person name="Kamihara K."/>
            <person name="Katsuta N."/>
            <person name="Sato K."/>
            <person name="Tanikawa M."/>
            <person name="Yamazaki M."/>
            <person name="Ninomiya K."/>
            <person name="Ishibashi T."/>
            <person name="Yamashita H."/>
            <person name="Murakawa K."/>
            <person name="Fujimori K."/>
            <person name="Tanai H."/>
            <person name="Kimata M."/>
            <person name="Watanabe M."/>
            <person name="Hiraoka S."/>
            <person name="Chiba Y."/>
            <person name="Ishida S."/>
            <person name="Ono Y."/>
            <person name="Takiguchi S."/>
            <person name="Watanabe S."/>
            <person name="Yosida M."/>
            <person name="Hotuta T."/>
            <person name="Kusano J."/>
            <person name="Kanehori K."/>
            <person name="Takahashi-Fujii A."/>
            <person name="Hara H."/>
            <person name="Tanase T.-O."/>
            <person name="Nomura Y."/>
            <person name="Togiya S."/>
            <person name="Komai F."/>
            <person name="Hara R."/>
            <person name="Takeuchi K."/>
            <person name="Arita M."/>
            <person name="Imose N."/>
            <person name="Musashino K."/>
            <person name="Yuuki H."/>
            <person name="Oshima A."/>
            <person name="Sasaki N."/>
            <person name="Aotsuka S."/>
            <person name="Yoshikawa Y."/>
            <person name="Matsunawa H."/>
            <person name="Ichihara T."/>
            <person name="Shiohata N."/>
            <person name="Sano S."/>
            <person name="Moriya S."/>
            <person name="Momiyama H."/>
            <person name="Satoh N."/>
            <person name="Takami S."/>
            <person name="Terashima Y."/>
            <person name="Suzuki O."/>
            <person name="Nakagawa S."/>
            <person name="Senoh A."/>
            <person name="Mizoguchi H."/>
            <person name="Goto Y."/>
            <person name="Shimizu F."/>
            <person name="Wakebe H."/>
            <person name="Hishigaki H."/>
            <person name="Watanabe T."/>
            <person name="Sugiyama A."/>
            <person name="Takemoto M."/>
            <person name="Kawakami B."/>
            <person name="Yamazaki M."/>
            <person name="Watanabe K."/>
            <person name="Kumagai A."/>
            <person name="Itakura S."/>
            <person name="Fukuzumi Y."/>
            <person name="Fujimori Y."/>
            <person name="Komiyama M."/>
            <person name="Tashiro H."/>
            <person name="Tanigami A."/>
            <person name="Fujiwara T."/>
            <person name="Ono T."/>
            <person name="Yamada K."/>
            <person name="Fujii Y."/>
            <person name="Ozaki K."/>
            <person name="Hirao M."/>
            <person name="Ohmori Y."/>
            <person name="Kawabata A."/>
            <person name="Hikiji T."/>
            <person name="Kobatake N."/>
            <person name="Inagaki H."/>
            <person name="Ikema Y."/>
            <person name="Okamoto S."/>
            <person name="Okitani R."/>
            <person name="Kawakami T."/>
            <person name="Noguchi S."/>
            <person name="Itoh T."/>
            <person name="Shigeta K."/>
            <person name="Senba T."/>
            <person name="Matsumura K."/>
            <person name="Nakajima Y."/>
            <person name="Mizuno T."/>
            <person name="Morinaga M."/>
            <person name="Sasaki M."/>
            <person name="Togashi T."/>
            <person name="Oyama M."/>
            <person name="Hata H."/>
            <person name="Watanabe M."/>
            <person name="Komatsu T."/>
            <person name="Mizushima-Sugano J."/>
            <person name="Satoh T."/>
            <person name="Shirai Y."/>
            <person name="Takahashi Y."/>
            <person name="Nakagawa K."/>
            <person name="Okumura K."/>
            <person name="Nagase T."/>
            <person name="Nomura N."/>
            <person name="Kikuchi H."/>
            <person name="Masuho Y."/>
            <person name="Yamashita R."/>
            <person name="Nakai K."/>
            <person name="Yada T."/>
            <person name="Nakamura Y."/>
            <person name="Ohara O."/>
            <person name="Isogai T."/>
            <person name="Sugano S."/>
        </authorList>
    </citation>
    <scope>NUCLEOTIDE SEQUENCE [LARGE SCALE MRNA] (ISOFORM 2)</scope>
    <source>
        <tissue>Adipose tissue</tissue>
    </source>
</reference>
<reference key="3">
    <citation type="journal article" date="2007" name="BMC Genomics">
        <title>The full-ORF clone resource of the German cDNA consortium.</title>
        <authorList>
            <person name="Bechtel S."/>
            <person name="Rosenfelder H."/>
            <person name="Duda A."/>
            <person name="Schmidt C.P."/>
            <person name="Ernst U."/>
            <person name="Wellenreuther R."/>
            <person name="Mehrle A."/>
            <person name="Schuster C."/>
            <person name="Bahr A."/>
            <person name="Bloecker H."/>
            <person name="Heubner D."/>
            <person name="Hoerlein A."/>
            <person name="Michel G."/>
            <person name="Wedler H."/>
            <person name="Koehrer K."/>
            <person name="Ottenwaelder B."/>
            <person name="Poustka A."/>
            <person name="Wiemann S."/>
            <person name="Schupp I."/>
        </authorList>
    </citation>
    <scope>NUCLEOTIDE SEQUENCE [LARGE SCALE MRNA] (ISOFORM 1)</scope>
    <source>
        <tissue>Adipose tissue</tissue>
    </source>
</reference>
<reference key="4">
    <citation type="journal article" date="2005" name="Nature">
        <title>The DNA sequence of the human X chromosome.</title>
        <authorList>
            <person name="Ross M.T."/>
            <person name="Grafham D.V."/>
            <person name="Coffey A.J."/>
            <person name="Scherer S."/>
            <person name="McLay K."/>
            <person name="Muzny D."/>
            <person name="Platzer M."/>
            <person name="Howell G.R."/>
            <person name="Burrows C."/>
            <person name="Bird C.P."/>
            <person name="Frankish A."/>
            <person name="Lovell F.L."/>
            <person name="Howe K.L."/>
            <person name="Ashurst J.L."/>
            <person name="Fulton R.S."/>
            <person name="Sudbrak R."/>
            <person name="Wen G."/>
            <person name="Jones M.C."/>
            <person name="Hurles M.E."/>
            <person name="Andrews T.D."/>
            <person name="Scott C.E."/>
            <person name="Searle S."/>
            <person name="Ramser J."/>
            <person name="Whittaker A."/>
            <person name="Deadman R."/>
            <person name="Carter N.P."/>
            <person name="Hunt S.E."/>
            <person name="Chen R."/>
            <person name="Cree A."/>
            <person name="Gunaratne P."/>
            <person name="Havlak P."/>
            <person name="Hodgson A."/>
            <person name="Metzker M.L."/>
            <person name="Richards S."/>
            <person name="Scott G."/>
            <person name="Steffen D."/>
            <person name="Sodergren E."/>
            <person name="Wheeler D.A."/>
            <person name="Worley K.C."/>
            <person name="Ainscough R."/>
            <person name="Ambrose K.D."/>
            <person name="Ansari-Lari M.A."/>
            <person name="Aradhya S."/>
            <person name="Ashwell R.I."/>
            <person name="Babbage A.K."/>
            <person name="Bagguley C.L."/>
            <person name="Ballabio A."/>
            <person name="Banerjee R."/>
            <person name="Barker G.E."/>
            <person name="Barlow K.F."/>
            <person name="Barrett I.P."/>
            <person name="Bates K.N."/>
            <person name="Beare D.M."/>
            <person name="Beasley H."/>
            <person name="Beasley O."/>
            <person name="Beck A."/>
            <person name="Bethel G."/>
            <person name="Blechschmidt K."/>
            <person name="Brady N."/>
            <person name="Bray-Allen S."/>
            <person name="Bridgeman A.M."/>
            <person name="Brown A.J."/>
            <person name="Brown M.J."/>
            <person name="Bonnin D."/>
            <person name="Bruford E.A."/>
            <person name="Buhay C."/>
            <person name="Burch P."/>
            <person name="Burford D."/>
            <person name="Burgess J."/>
            <person name="Burrill W."/>
            <person name="Burton J."/>
            <person name="Bye J.M."/>
            <person name="Carder C."/>
            <person name="Carrel L."/>
            <person name="Chako J."/>
            <person name="Chapman J.C."/>
            <person name="Chavez D."/>
            <person name="Chen E."/>
            <person name="Chen G."/>
            <person name="Chen Y."/>
            <person name="Chen Z."/>
            <person name="Chinault C."/>
            <person name="Ciccodicola A."/>
            <person name="Clark S.Y."/>
            <person name="Clarke G."/>
            <person name="Clee C.M."/>
            <person name="Clegg S."/>
            <person name="Clerc-Blankenburg K."/>
            <person name="Clifford K."/>
            <person name="Cobley V."/>
            <person name="Cole C.G."/>
            <person name="Conquer J.S."/>
            <person name="Corby N."/>
            <person name="Connor R.E."/>
            <person name="David R."/>
            <person name="Davies J."/>
            <person name="Davis C."/>
            <person name="Davis J."/>
            <person name="Delgado O."/>
            <person name="Deshazo D."/>
            <person name="Dhami P."/>
            <person name="Ding Y."/>
            <person name="Dinh H."/>
            <person name="Dodsworth S."/>
            <person name="Draper H."/>
            <person name="Dugan-Rocha S."/>
            <person name="Dunham A."/>
            <person name="Dunn M."/>
            <person name="Durbin K.J."/>
            <person name="Dutta I."/>
            <person name="Eades T."/>
            <person name="Ellwood M."/>
            <person name="Emery-Cohen A."/>
            <person name="Errington H."/>
            <person name="Evans K.L."/>
            <person name="Faulkner L."/>
            <person name="Francis F."/>
            <person name="Frankland J."/>
            <person name="Fraser A.E."/>
            <person name="Galgoczy P."/>
            <person name="Gilbert J."/>
            <person name="Gill R."/>
            <person name="Gloeckner G."/>
            <person name="Gregory S.G."/>
            <person name="Gribble S."/>
            <person name="Griffiths C."/>
            <person name="Grocock R."/>
            <person name="Gu Y."/>
            <person name="Gwilliam R."/>
            <person name="Hamilton C."/>
            <person name="Hart E.A."/>
            <person name="Hawes A."/>
            <person name="Heath P.D."/>
            <person name="Heitmann K."/>
            <person name="Hennig S."/>
            <person name="Hernandez J."/>
            <person name="Hinzmann B."/>
            <person name="Ho S."/>
            <person name="Hoffs M."/>
            <person name="Howden P.J."/>
            <person name="Huckle E.J."/>
            <person name="Hume J."/>
            <person name="Hunt P.J."/>
            <person name="Hunt A.R."/>
            <person name="Isherwood J."/>
            <person name="Jacob L."/>
            <person name="Johnson D."/>
            <person name="Jones S."/>
            <person name="de Jong P.J."/>
            <person name="Joseph S.S."/>
            <person name="Keenan S."/>
            <person name="Kelly S."/>
            <person name="Kershaw J.K."/>
            <person name="Khan Z."/>
            <person name="Kioschis P."/>
            <person name="Klages S."/>
            <person name="Knights A.J."/>
            <person name="Kosiura A."/>
            <person name="Kovar-Smith C."/>
            <person name="Laird G.K."/>
            <person name="Langford C."/>
            <person name="Lawlor S."/>
            <person name="Leversha M."/>
            <person name="Lewis L."/>
            <person name="Liu W."/>
            <person name="Lloyd C."/>
            <person name="Lloyd D.M."/>
            <person name="Loulseged H."/>
            <person name="Loveland J.E."/>
            <person name="Lovell J.D."/>
            <person name="Lozado R."/>
            <person name="Lu J."/>
            <person name="Lyne R."/>
            <person name="Ma J."/>
            <person name="Maheshwari M."/>
            <person name="Matthews L.H."/>
            <person name="McDowall J."/>
            <person name="McLaren S."/>
            <person name="McMurray A."/>
            <person name="Meidl P."/>
            <person name="Meitinger T."/>
            <person name="Milne S."/>
            <person name="Miner G."/>
            <person name="Mistry S.L."/>
            <person name="Morgan M."/>
            <person name="Morris S."/>
            <person name="Mueller I."/>
            <person name="Mullikin J.C."/>
            <person name="Nguyen N."/>
            <person name="Nordsiek G."/>
            <person name="Nyakatura G."/>
            <person name="O'dell C.N."/>
            <person name="Okwuonu G."/>
            <person name="Palmer S."/>
            <person name="Pandian R."/>
            <person name="Parker D."/>
            <person name="Parrish J."/>
            <person name="Pasternak S."/>
            <person name="Patel D."/>
            <person name="Pearce A.V."/>
            <person name="Pearson D.M."/>
            <person name="Pelan S.E."/>
            <person name="Perez L."/>
            <person name="Porter K.M."/>
            <person name="Ramsey Y."/>
            <person name="Reichwald K."/>
            <person name="Rhodes S."/>
            <person name="Ridler K.A."/>
            <person name="Schlessinger D."/>
            <person name="Schueler M.G."/>
            <person name="Sehra H.K."/>
            <person name="Shaw-Smith C."/>
            <person name="Shen H."/>
            <person name="Sheridan E.M."/>
            <person name="Shownkeen R."/>
            <person name="Skuce C.D."/>
            <person name="Smith M.L."/>
            <person name="Sotheran E.C."/>
            <person name="Steingruber H.E."/>
            <person name="Steward C.A."/>
            <person name="Storey R."/>
            <person name="Swann R.M."/>
            <person name="Swarbreck D."/>
            <person name="Tabor P.E."/>
            <person name="Taudien S."/>
            <person name="Taylor T."/>
            <person name="Teague B."/>
            <person name="Thomas K."/>
            <person name="Thorpe A."/>
            <person name="Timms K."/>
            <person name="Tracey A."/>
            <person name="Trevanion S."/>
            <person name="Tromans A.C."/>
            <person name="d'Urso M."/>
            <person name="Verduzco D."/>
            <person name="Villasana D."/>
            <person name="Waldron L."/>
            <person name="Wall M."/>
            <person name="Wang Q."/>
            <person name="Warren J."/>
            <person name="Warry G.L."/>
            <person name="Wei X."/>
            <person name="West A."/>
            <person name="Whitehead S.L."/>
            <person name="Whiteley M.N."/>
            <person name="Wilkinson J.E."/>
            <person name="Willey D.L."/>
            <person name="Williams G."/>
            <person name="Williams L."/>
            <person name="Williamson A."/>
            <person name="Williamson H."/>
            <person name="Wilming L."/>
            <person name="Woodmansey R.L."/>
            <person name="Wray P.W."/>
            <person name="Yen J."/>
            <person name="Zhang J."/>
            <person name="Zhou J."/>
            <person name="Zoghbi H."/>
            <person name="Zorilla S."/>
            <person name="Buck D."/>
            <person name="Reinhardt R."/>
            <person name="Poustka A."/>
            <person name="Rosenthal A."/>
            <person name="Lehrach H."/>
            <person name="Meindl A."/>
            <person name="Minx P.J."/>
            <person name="Hillier L.W."/>
            <person name="Willard H.F."/>
            <person name="Wilson R.K."/>
            <person name="Waterston R.H."/>
            <person name="Rice C.M."/>
            <person name="Vaudin M."/>
            <person name="Coulson A."/>
            <person name="Nelson D.L."/>
            <person name="Weinstock G."/>
            <person name="Sulston J.E."/>
            <person name="Durbin R.M."/>
            <person name="Hubbard T."/>
            <person name="Gibbs R.A."/>
            <person name="Beck S."/>
            <person name="Rogers J."/>
            <person name="Bentley D.R."/>
        </authorList>
    </citation>
    <scope>NUCLEOTIDE SEQUENCE [LARGE SCALE GENOMIC DNA]</scope>
</reference>
<reference key="5">
    <citation type="journal article" date="2004" name="Genome Res.">
        <title>The status, quality, and expansion of the NIH full-length cDNA project: the Mammalian Gene Collection (MGC).</title>
        <authorList>
            <consortium name="The MGC Project Team"/>
        </authorList>
    </citation>
    <scope>NUCLEOTIDE SEQUENCE [LARGE SCALE MRNA] (ISOFORMS 1 AND 3)</scope>
    <source>
        <tissue>Placenta</tissue>
    </source>
</reference>
<evidence type="ECO:0000255" key="1">
    <source>
        <dbReference type="PROSITE-ProRule" id="PRU00042"/>
    </source>
</evidence>
<evidence type="ECO:0000255" key="2">
    <source>
        <dbReference type="PROSITE-ProRule" id="PRU00187"/>
    </source>
</evidence>
<evidence type="ECO:0000256" key="3">
    <source>
        <dbReference type="SAM" id="MobiDB-lite"/>
    </source>
</evidence>
<evidence type="ECO:0000303" key="4">
    <source>
    </source>
</evidence>
<evidence type="ECO:0000303" key="5">
    <source>
    </source>
</evidence>
<evidence type="ECO:0000305" key="6"/>
<keyword id="KW-0025">Alternative splicing</keyword>
<keyword id="KW-0238">DNA-binding</keyword>
<keyword id="KW-0479">Metal-binding</keyword>
<keyword id="KW-0539">Nucleus</keyword>
<keyword id="KW-1267">Proteomics identification</keyword>
<keyword id="KW-1185">Reference proteome</keyword>
<keyword id="KW-0677">Repeat</keyword>
<keyword id="KW-0804">Transcription</keyword>
<keyword id="KW-0805">Transcription regulation</keyword>
<keyword id="KW-0862">Zinc</keyword>
<keyword id="KW-0863">Zinc-finger</keyword>
<proteinExistence type="evidence at protein level"/>
<sequence length="518" mass="59932">MAVALGCAIQASLNQGSVFQEYDTDCEVFRQRFRQFQYREAAGPHEAFNKLWELCCQWLKPKMRSKEQILELLVLEQFLTILPTEIETWVREHCPENRERVVSLIEDLQRELEIPEQQVDMHDMLLEELAPVGTAHIPPTMHLESPALQVMGPAQEAPVAEAWIPQAGPPELNYGATGECQNFLDPGYPLPKLDMNFSLENREEPWVKELQDSKEMKQLLDSKIGFEIGIENEEDTSKQKKMETMYPFIVTLEGNALQGPILQKDYVQLENQWETPPEDLQTDLAKLVDQQNPTLGETPENSNLEEPLNPKPHKKKSPGEKPHRCPQCGKCFARKSQLTGHQRIHSGEEPHKCPECGKRFLRSSDLYRHQRLHTGERPYECTVCKKRFTRRSHLIGHQRTHSEEETYKCLECGKSFCHGSSLKRHLKTHTGEKPHRCHNCGKSFSRLTALTLHQRTHTEERPFKCNYCGKSFRQRPSLVIHLRIHTGEKPYKCTHCSKSFRQRAGLIMHQVTHFRGLI</sequence>
<dbReference type="EMBL" id="AY280801">
    <property type="protein sequence ID" value="AAQ16305.1"/>
    <property type="molecule type" value="mRNA"/>
</dbReference>
<dbReference type="EMBL" id="AK074194">
    <property type="protein sequence ID" value="BAB85013.1"/>
    <property type="molecule type" value="mRNA"/>
</dbReference>
<dbReference type="EMBL" id="AL833407">
    <property type="protein sequence ID" value="CAD38639.1"/>
    <property type="molecule type" value="mRNA"/>
</dbReference>
<dbReference type="EMBL" id="AL450472">
    <property type="status" value="NOT_ANNOTATED_CDS"/>
    <property type="molecule type" value="Genomic_DNA"/>
</dbReference>
<dbReference type="EMBL" id="BC060768">
    <property type="protein sequence ID" value="AAH60768.1"/>
    <property type="molecule type" value="mRNA"/>
</dbReference>
<dbReference type="EMBL" id="BC065938">
    <property type="protein sequence ID" value="AAH65938.1"/>
    <property type="molecule type" value="mRNA"/>
</dbReference>
<dbReference type="CCDS" id="CCDS14649.1">
    <molecule id="Q6P9G9-1"/>
</dbReference>
<dbReference type="RefSeq" id="NP_689908.3">
    <molecule id="Q6P9G9-1"/>
    <property type="nucleotide sequence ID" value="NM_152695.5"/>
</dbReference>
<dbReference type="RefSeq" id="XP_011529614.1">
    <property type="nucleotide sequence ID" value="XM_011531312.2"/>
</dbReference>
<dbReference type="RefSeq" id="XP_047297870.1">
    <molecule id="Q6P9G9-1"/>
    <property type="nucleotide sequence ID" value="XM_047441914.1"/>
</dbReference>
<dbReference type="RefSeq" id="XP_054182652.1">
    <molecule id="Q6P9G9-1"/>
    <property type="nucleotide sequence ID" value="XM_054326677.1"/>
</dbReference>
<dbReference type="SMR" id="Q6P9G9"/>
<dbReference type="BioGRID" id="128476">
    <property type="interactions" value="18"/>
</dbReference>
<dbReference type="FunCoup" id="Q6P9G9">
    <property type="interactions" value="351"/>
</dbReference>
<dbReference type="IntAct" id="Q6P9G9">
    <property type="interactions" value="8"/>
</dbReference>
<dbReference type="STRING" id="9606.ENSP00000339585"/>
<dbReference type="GlyGen" id="Q6P9G9">
    <property type="glycosylation" value="1 site, 1 O-linked glycan (1 site)"/>
</dbReference>
<dbReference type="iPTMnet" id="Q6P9G9"/>
<dbReference type="PhosphoSitePlus" id="Q6P9G9"/>
<dbReference type="BioMuta" id="ZNF449"/>
<dbReference type="DMDM" id="92090580"/>
<dbReference type="jPOST" id="Q6P9G9"/>
<dbReference type="MassIVE" id="Q6P9G9"/>
<dbReference type="PaxDb" id="9606-ENSP00000339585"/>
<dbReference type="PeptideAtlas" id="Q6P9G9"/>
<dbReference type="ProteomicsDB" id="67046">
    <molecule id="Q6P9G9-1"/>
</dbReference>
<dbReference type="ABCD" id="Q6P9G9">
    <property type="antibodies" value="3 sequenced antibodies"/>
</dbReference>
<dbReference type="Antibodypedia" id="16515">
    <property type="antibodies" value="197 antibodies from 20 providers"/>
</dbReference>
<dbReference type="DNASU" id="203523"/>
<dbReference type="Ensembl" id="ENST00000339249.5">
    <molecule id="Q6P9G9-1"/>
    <property type="protein sequence ID" value="ENSP00000339585.4"/>
    <property type="gene ID" value="ENSG00000173275.13"/>
</dbReference>
<dbReference type="Ensembl" id="ENST00000370761.7">
    <molecule id="Q6P9G9-2"/>
    <property type="protein sequence ID" value="ENSP00000359797.3"/>
    <property type="gene ID" value="ENSG00000173275.13"/>
</dbReference>
<dbReference type="GeneID" id="203523"/>
<dbReference type="KEGG" id="hsa:203523"/>
<dbReference type="MANE-Select" id="ENST00000339249.5">
    <property type="protein sequence ID" value="ENSP00000339585.4"/>
    <property type="RefSeq nucleotide sequence ID" value="NM_152695.6"/>
    <property type="RefSeq protein sequence ID" value="NP_689908.3"/>
</dbReference>
<dbReference type="UCSC" id="uc004eyr.5">
    <molecule id="Q6P9G9-1"/>
    <property type="organism name" value="human"/>
</dbReference>
<dbReference type="AGR" id="HGNC:21039"/>
<dbReference type="CTD" id="203523"/>
<dbReference type="DisGeNET" id="203523"/>
<dbReference type="GeneCards" id="ZNF449"/>
<dbReference type="HGNC" id="HGNC:21039">
    <property type="gene designation" value="ZNF449"/>
</dbReference>
<dbReference type="HPA" id="ENSG00000173275">
    <property type="expression patterns" value="Low tissue specificity"/>
</dbReference>
<dbReference type="MIM" id="300627">
    <property type="type" value="gene"/>
</dbReference>
<dbReference type="neXtProt" id="NX_Q6P9G9"/>
<dbReference type="OpenTargets" id="ENSG00000173275"/>
<dbReference type="PharmGKB" id="PA134920699"/>
<dbReference type="VEuPathDB" id="HostDB:ENSG00000173275"/>
<dbReference type="eggNOG" id="KOG1721">
    <property type="taxonomic scope" value="Eukaryota"/>
</dbReference>
<dbReference type="GeneTree" id="ENSGT00940000160108"/>
<dbReference type="HOGENOM" id="CLU_002678_53_5_1"/>
<dbReference type="InParanoid" id="Q6P9G9"/>
<dbReference type="OMA" id="LDMNFPL"/>
<dbReference type="OrthoDB" id="6077919at2759"/>
<dbReference type="PAN-GO" id="Q6P9G9">
    <property type="GO annotations" value="3 GO annotations based on evolutionary models"/>
</dbReference>
<dbReference type="PhylomeDB" id="Q6P9G9"/>
<dbReference type="TreeFam" id="TF336949"/>
<dbReference type="PathwayCommons" id="Q6P9G9"/>
<dbReference type="SignaLink" id="Q6P9G9"/>
<dbReference type="BioGRID-ORCS" id="203523">
    <property type="hits" value="7 hits in 797 CRISPR screens"/>
</dbReference>
<dbReference type="ChiTaRS" id="ZNF449">
    <property type="organism name" value="human"/>
</dbReference>
<dbReference type="GenomeRNAi" id="203523"/>
<dbReference type="Pharos" id="Q6P9G9">
    <property type="development level" value="Tdark"/>
</dbReference>
<dbReference type="PRO" id="PR:Q6P9G9"/>
<dbReference type="Proteomes" id="UP000005640">
    <property type="component" value="Chromosome X"/>
</dbReference>
<dbReference type="RNAct" id="Q6P9G9">
    <property type="molecule type" value="protein"/>
</dbReference>
<dbReference type="Bgee" id="ENSG00000173275">
    <property type="expression patterns" value="Expressed in oocyte and 173 other cell types or tissues"/>
</dbReference>
<dbReference type="GO" id="GO:0005634">
    <property type="term" value="C:nucleus"/>
    <property type="evidence" value="ECO:0007669"/>
    <property type="project" value="UniProtKB-SubCell"/>
</dbReference>
<dbReference type="GO" id="GO:0000981">
    <property type="term" value="F:DNA-binding transcription factor activity, RNA polymerase II-specific"/>
    <property type="evidence" value="ECO:0000318"/>
    <property type="project" value="GO_Central"/>
</dbReference>
<dbReference type="GO" id="GO:0000978">
    <property type="term" value="F:RNA polymerase II cis-regulatory region sequence-specific DNA binding"/>
    <property type="evidence" value="ECO:0000318"/>
    <property type="project" value="GO_Central"/>
</dbReference>
<dbReference type="GO" id="GO:1990837">
    <property type="term" value="F:sequence-specific double-stranded DNA binding"/>
    <property type="evidence" value="ECO:0000314"/>
    <property type="project" value="ARUK-UCL"/>
</dbReference>
<dbReference type="GO" id="GO:0008270">
    <property type="term" value="F:zinc ion binding"/>
    <property type="evidence" value="ECO:0007669"/>
    <property type="project" value="UniProtKB-KW"/>
</dbReference>
<dbReference type="GO" id="GO:0006357">
    <property type="term" value="P:regulation of transcription by RNA polymerase II"/>
    <property type="evidence" value="ECO:0000318"/>
    <property type="project" value="GO_Central"/>
</dbReference>
<dbReference type="GO" id="GO:0007284">
    <property type="term" value="P:spermatogonial cell division"/>
    <property type="evidence" value="ECO:0007669"/>
    <property type="project" value="Ensembl"/>
</dbReference>
<dbReference type="CDD" id="cd00065">
    <property type="entry name" value="FYVE_like_SF"/>
    <property type="match status" value="1"/>
</dbReference>
<dbReference type="CDD" id="cd07936">
    <property type="entry name" value="SCAN"/>
    <property type="match status" value="1"/>
</dbReference>
<dbReference type="FunFam" id="3.30.160.60:FF:000467">
    <property type="entry name" value="Zinc finger and SCAN domain-containing 21"/>
    <property type="match status" value="2"/>
</dbReference>
<dbReference type="FunFam" id="3.30.160.60:FF:000869">
    <property type="entry name" value="Zinc finger protein 213"/>
    <property type="match status" value="1"/>
</dbReference>
<dbReference type="FunFam" id="1.10.4020.10:FF:000001">
    <property type="entry name" value="zinc finger protein 263 isoform X1"/>
    <property type="match status" value="1"/>
</dbReference>
<dbReference type="FunFam" id="3.30.160.60:FF:000761">
    <property type="entry name" value="Zinc finger protein 449"/>
    <property type="match status" value="1"/>
</dbReference>
<dbReference type="FunFam" id="3.30.160.60:FF:001562">
    <property type="entry name" value="Zinc finger protein 449"/>
    <property type="match status" value="1"/>
</dbReference>
<dbReference type="FunFam" id="3.30.160.60:FF:000959">
    <property type="entry name" value="zinc finger protein 449"/>
    <property type="match status" value="1"/>
</dbReference>
<dbReference type="FunFam" id="3.30.160.60:FF:000070">
    <property type="entry name" value="zinc finger protein 689 isoform X1"/>
    <property type="match status" value="1"/>
</dbReference>
<dbReference type="Gene3D" id="3.30.160.60">
    <property type="entry name" value="Classic Zinc Finger"/>
    <property type="match status" value="7"/>
</dbReference>
<dbReference type="Gene3D" id="1.10.4020.10">
    <property type="entry name" value="DNA breaking-rejoining enzymes"/>
    <property type="match status" value="1"/>
</dbReference>
<dbReference type="InterPro" id="IPR003309">
    <property type="entry name" value="SCAN_dom"/>
</dbReference>
<dbReference type="InterPro" id="IPR038269">
    <property type="entry name" value="SCAN_sf"/>
</dbReference>
<dbReference type="InterPro" id="IPR036236">
    <property type="entry name" value="Znf_C2H2_sf"/>
</dbReference>
<dbReference type="InterPro" id="IPR013087">
    <property type="entry name" value="Znf_C2H2_type"/>
</dbReference>
<dbReference type="PANTHER" id="PTHR23226">
    <property type="entry name" value="ZINC FINGER AND SCAN DOMAIN-CONTAINING"/>
    <property type="match status" value="1"/>
</dbReference>
<dbReference type="PANTHER" id="PTHR23226:SF4">
    <property type="entry name" value="ZINC FINGER PROTEIN 449"/>
    <property type="match status" value="1"/>
</dbReference>
<dbReference type="Pfam" id="PF02023">
    <property type="entry name" value="SCAN"/>
    <property type="match status" value="1"/>
</dbReference>
<dbReference type="Pfam" id="PF00096">
    <property type="entry name" value="zf-C2H2"/>
    <property type="match status" value="7"/>
</dbReference>
<dbReference type="SMART" id="SM00431">
    <property type="entry name" value="SCAN"/>
    <property type="match status" value="1"/>
</dbReference>
<dbReference type="SMART" id="SM00355">
    <property type="entry name" value="ZnF_C2H2"/>
    <property type="match status" value="7"/>
</dbReference>
<dbReference type="SUPFAM" id="SSF57667">
    <property type="entry name" value="beta-beta-alpha zinc fingers"/>
    <property type="match status" value="4"/>
</dbReference>
<dbReference type="SUPFAM" id="SSF47353">
    <property type="entry name" value="Retrovirus capsid dimerization domain-like"/>
    <property type="match status" value="1"/>
</dbReference>
<dbReference type="PROSITE" id="PS50804">
    <property type="entry name" value="SCAN_BOX"/>
    <property type="match status" value="1"/>
</dbReference>
<dbReference type="PROSITE" id="PS00028">
    <property type="entry name" value="ZINC_FINGER_C2H2_1"/>
    <property type="match status" value="7"/>
</dbReference>
<dbReference type="PROSITE" id="PS50157">
    <property type="entry name" value="ZINC_FINGER_C2H2_2"/>
    <property type="match status" value="7"/>
</dbReference>
<name>ZN449_HUMAN</name>
<protein>
    <recommendedName>
        <fullName>Zinc finger protein 449</fullName>
    </recommendedName>
    <alternativeName>
        <fullName>Zinc finger and SCAN domain-containing protein 19</fullName>
    </alternativeName>
</protein>
<comment type="function">
    <text>May be involved in transcriptional regulation.</text>
</comment>
<comment type="interaction">
    <interactant intactId="EBI-10215956">
        <id>Q6P9G9</id>
    </interactant>
    <interactant intactId="EBI-746778">
        <id>Q96A72</id>
        <label>MAGOHB</label>
    </interactant>
    <organismsDiffer>false</organismsDiffer>
    <experiments>3</experiments>
</comment>
<comment type="interaction">
    <interactant intactId="EBI-10215956">
        <id>Q6P9G9</id>
    </interactant>
    <interactant intactId="EBI-10288852">
        <id>Q9UBU8-2</id>
        <label>MORF4L1</label>
    </interactant>
    <organismsDiffer>false</organismsDiffer>
    <experiments>3</experiments>
</comment>
<comment type="interaction">
    <interactant intactId="EBI-10215956">
        <id>Q6P9G9</id>
    </interactant>
    <interactant intactId="EBI-714158">
        <id>Q13526</id>
        <label>PIN1</label>
    </interactant>
    <organismsDiffer>false</organismsDiffer>
    <experiments>3</experiments>
</comment>
<comment type="interaction">
    <interactant intactId="EBI-10215956">
        <id>Q6P9G9</id>
    </interactant>
    <interactant intactId="EBI-745846">
        <id>P57086</id>
        <label>SCAND1</label>
    </interactant>
    <organismsDiffer>false</organismsDiffer>
    <experiments>8</experiments>
</comment>
<comment type="interaction">
    <interactant intactId="EBI-10215956">
        <id>Q6P9G9</id>
    </interactant>
    <interactant intactId="EBI-10178224">
        <id>P10073</id>
        <label>ZSCAN22</label>
    </interactant>
    <organismsDiffer>false</organismsDiffer>
    <experiments>3</experiments>
</comment>
<comment type="subcellular location">
    <subcellularLocation>
        <location evidence="2">Nucleus</location>
    </subcellularLocation>
</comment>
<comment type="alternative products">
    <event type="alternative splicing"/>
    <isoform>
        <id>Q6P9G9-1</id>
        <name>1</name>
        <sequence type="displayed"/>
    </isoform>
    <isoform>
        <id>Q6P9G9-2</id>
        <name>2</name>
        <sequence type="described" ref="VSP_011949 VSP_011950"/>
    </isoform>
    <isoform>
        <id>Q6P9G9-3</id>
        <name>3</name>
        <sequence type="described" ref="VSP_011951 VSP_011952"/>
    </isoform>
</comment>
<comment type="similarity">
    <text evidence="6">Belongs to the krueppel C2H2-type zinc-finger protein family.</text>
</comment>
<accession>Q6P9G9</accession>
<accession>Q5JRZ7</accession>
<accession>Q5JRZ8</accession>
<accession>Q6NZX2</accession>
<accession>Q8N3Q1</accession>
<accession>Q8TED7</accession>